<dbReference type="EMBL" id="U82546">
    <property type="protein sequence ID" value="AAB40146.1"/>
    <property type="status" value="ALT_SEQ"/>
    <property type="molecule type" value="Genomic_DNA"/>
</dbReference>
<dbReference type="EMBL" id="U10556">
    <property type="protein sequence ID" value="AAB68897.1"/>
    <property type="status" value="ALT_SEQ"/>
    <property type="molecule type" value="Genomic_DNA"/>
</dbReference>
<dbReference type="EMBL" id="BK006934">
    <property type="protein sequence ID" value="DAA06774.1"/>
    <property type="molecule type" value="Genomic_DNA"/>
</dbReference>
<dbReference type="PIR" id="S72456">
    <property type="entry name" value="S72456"/>
</dbReference>
<dbReference type="RefSeq" id="NP_011947.2">
    <property type="nucleotide sequence ID" value="NM_001180026.1"/>
</dbReference>
<dbReference type="SMR" id="P89114"/>
<dbReference type="BioGRID" id="36514">
    <property type="interactions" value="32"/>
</dbReference>
<dbReference type="ComplexPortal" id="CPX-1288">
    <property type="entry name" value="MEI5-SAE3 recombination assembly factor complex"/>
</dbReference>
<dbReference type="DIP" id="DIP-5100N"/>
<dbReference type="FunCoup" id="P89114">
    <property type="interactions" value="34"/>
</dbReference>
<dbReference type="IntAct" id="P89114">
    <property type="interactions" value="2"/>
</dbReference>
<dbReference type="STRING" id="4932.YHR079C-A"/>
<dbReference type="iPTMnet" id="P89114"/>
<dbReference type="PaxDb" id="4932-YHR079C-A"/>
<dbReference type="EnsemblFungi" id="YHR079C-A_mRNA">
    <property type="protein sequence ID" value="YHR079C-A"/>
    <property type="gene ID" value="YHR079C-A"/>
</dbReference>
<dbReference type="GeneID" id="856479"/>
<dbReference type="KEGG" id="sce:YHR079C-A"/>
<dbReference type="AGR" id="SGD:S000001957"/>
<dbReference type="SGD" id="S000001957">
    <property type="gene designation" value="SAE3"/>
</dbReference>
<dbReference type="VEuPathDB" id="FungiDB:YHR079C-A"/>
<dbReference type="eggNOG" id="ENOG502S9IK">
    <property type="taxonomic scope" value="Eukaryota"/>
</dbReference>
<dbReference type="HOGENOM" id="CLU_106110_2_0_1"/>
<dbReference type="InParanoid" id="P89114"/>
<dbReference type="OMA" id="EYESMNG"/>
<dbReference type="OrthoDB" id="255837at2759"/>
<dbReference type="BioCyc" id="YEAST:G3O-31241-MONOMER"/>
<dbReference type="BioGRID-ORCS" id="856479">
    <property type="hits" value="0 hits in 10 CRISPR screens"/>
</dbReference>
<dbReference type="PRO" id="PR:P89114"/>
<dbReference type="Proteomes" id="UP000002311">
    <property type="component" value="Chromosome VIII"/>
</dbReference>
<dbReference type="RNAct" id="P89114">
    <property type="molecule type" value="protein"/>
</dbReference>
<dbReference type="GO" id="GO:0000794">
    <property type="term" value="C:condensed nuclear chromosome"/>
    <property type="evidence" value="ECO:0000314"/>
    <property type="project" value="SGD"/>
</dbReference>
<dbReference type="GO" id="GO:0000228">
    <property type="term" value="C:nuclear chromosome"/>
    <property type="evidence" value="ECO:0000314"/>
    <property type="project" value="ComplexPortal"/>
</dbReference>
<dbReference type="GO" id="GO:0032798">
    <property type="term" value="C:Swi5-Sfr1 complex"/>
    <property type="evidence" value="ECO:0000353"/>
    <property type="project" value="ComplexPortal"/>
</dbReference>
<dbReference type="GO" id="GO:0000707">
    <property type="term" value="P:meiotic DNA recombinase assembly"/>
    <property type="evidence" value="ECO:0000315"/>
    <property type="project" value="SGD"/>
</dbReference>
<dbReference type="GO" id="GO:0007131">
    <property type="term" value="P:reciprocal meiotic recombination"/>
    <property type="evidence" value="ECO:0000315"/>
    <property type="project" value="SGD"/>
</dbReference>
<dbReference type="FunFam" id="1.20.5.170:FF:000165">
    <property type="entry name" value="Pachytene arrest protein SAE3"/>
    <property type="match status" value="1"/>
</dbReference>
<dbReference type="Gene3D" id="1.20.5.170">
    <property type="match status" value="1"/>
</dbReference>
<dbReference type="InterPro" id="IPR010760">
    <property type="entry name" value="DNA-repair_Swi5"/>
</dbReference>
<dbReference type="Pfam" id="PF07061">
    <property type="entry name" value="Swi5"/>
    <property type="match status" value="1"/>
</dbReference>
<evidence type="ECO:0000269" key="1">
    <source>
    </source>
</evidence>
<evidence type="ECO:0000269" key="2">
    <source>
    </source>
</evidence>
<evidence type="ECO:0000269" key="3">
    <source>
    </source>
</evidence>
<evidence type="ECO:0000269" key="4">
    <source>
    </source>
</evidence>
<evidence type="ECO:0000269" key="5">
    <source>
    </source>
</evidence>
<evidence type="ECO:0000305" key="6"/>
<keyword id="KW-0227">DNA damage</keyword>
<keyword id="KW-0234">DNA repair</keyword>
<keyword id="KW-0469">Meiosis</keyword>
<keyword id="KW-0539">Nucleus</keyword>
<keyword id="KW-1185">Reference proteome</keyword>
<accession>P89114</accession>
<accession>D3DL30</accession>
<sequence>MNYLETQLNKKQKQIQEYESMNGNLIKMFEQLSKEKKNDETPKKISSTYIKELKEYNELRDAGLRLAQIIADEKQCKIKDVFEEIGYSMKD</sequence>
<proteinExistence type="evidence at protein level"/>
<protein>
    <recommendedName>
        <fullName>Pachytene arrest protein SAE3</fullName>
    </recommendedName>
    <alternativeName>
        <fullName>Sporulation in the absence of SPO11 protein 3</fullName>
    </alternativeName>
</protein>
<feature type="chain" id="PRO_0000269645" description="Pachytene arrest protein SAE3">
    <location>
        <begin position="1"/>
        <end position="91"/>
    </location>
</feature>
<name>SAE3_YEAST</name>
<reference key="1">
    <citation type="journal article" date="1997" name="Genetics">
        <title>Mutations in Saccharomyces cerevisiae that block meiotic prophase chromosome metabolism and confer cell cycle arrest at pachytene identify two new meiosis-specific genes SAE1 and SAE3.</title>
        <authorList>
            <person name="McKee A.H.Z."/>
            <person name="Kleckner N."/>
        </authorList>
    </citation>
    <scope>NUCLEOTIDE SEQUENCE [GENOMIC DNA]</scope>
    <scope>FUNCTION</scope>
    <scope>INDUCTION</scope>
</reference>
<reference key="2">
    <citation type="journal article" date="1994" name="Science">
        <title>Complete nucleotide sequence of Saccharomyces cerevisiae chromosome VIII.</title>
        <authorList>
            <person name="Johnston M."/>
            <person name="Andrews S."/>
            <person name="Brinkman R."/>
            <person name="Cooper J."/>
            <person name="Ding H."/>
            <person name="Dover J."/>
            <person name="Du Z."/>
            <person name="Favello A."/>
            <person name="Fulton L."/>
            <person name="Gattung S."/>
            <person name="Geisel C."/>
            <person name="Kirsten J."/>
            <person name="Kucaba T."/>
            <person name="Hillier L.W."/>
            <person name="Jier M."/>
            <person name="Johnston L."/>
            <person name="Langston Y."/>
            <person name="Latreille P."/>
            <person name="Louis E.J."/>
            <person name="Macri C."/>
            <person name="Mardis E."/>
            <person name="Menezes S."/>
            <person name="Mouser L."/>
            <person name="Nhan M."/>
            <person name="Rifkin L."/>
            <person name="Riles L."/>
            <person name="St Peter H."/>
            <person name="Trevaskis E."/>
            <person name="Vaughan K."/>
            <person name="Vignati D."/>
            <person name="Wilcox L."/>
            <person name="Wohldman P."/>
            <person name="Waterston R."/>
            <person name="Wilson R."/>
            <person name="Vaudin M."/>
        </authorList>
    </citation>
    <scope>NUCLEOTIDE SEQUENCE [LARGE SCALE GENOMIC DNA]</scope>
    <source>
        <strain>ATCC 204508 / S288c</strain>
    </source>
</reference>
<reference key="3">
    <citation type="journal article" date="2014" name="G3 (Bethesda)">
        <title>The reference genome sequence of Saccharomyces cerevisiae: Then and now.</title>
        <authorList>
            <person name="Engel S.R."/>
            <person name="Dietrich F.S."/>
            <person name="Fisk D.G."/>
            <person name="Binkley G."/>
            <person name="Balakrishnan R."/>
            <person name="Costanzo M.C."/>
            <person name="Dwight S.S."/>
            <person name="Hitz B.C."/>
            <person name="Karra K."/>
            <person name="Nash R.S."/>
            <person name="Weng S."/>
            <person name="Wong E.D."/>
            <person name="Lloyd P."/>
            <person name="Skrzypek M.S."/>
            <person name="Miyasato S.R."/>
            <person name="Simison M."/>
            <person name="Cherry J.M."/>
        </authorList>
    </citation>
    <scope>GENOME REANNOTATION</scope>
    <source>
        <strain>ATCC 204508 / S288c</strain>
    </source>
</reference>
<reference key="4">
    <citation type="journal article" date="2004" name="Cell">
        <title>A protein complex containing Mei5 and Sae3 promotes the assembly of the meiosis-specific RecA homolog Dmc1.</title>
        <authorList>
            <person name="Hayase A."/>
            <person name="Takagi M."/>
            <person name="Miyazaki T."/>
            <person name="Oshiumi H."/>
            <person name="Shinohara M."/>
            <person name="Shinohara A."/>
        </authorList>
    </citation>
    <scope>FUNCTION</scope>
    <scope>SUBCELLULAR LOCATION</scope>
    <scope>INTERACTION WITH MEI5 AND DMC1</scope>
    <scope>REVISION OF GENE MODEL</scope>
</reference>
<reference key="5">
    <citation type="journal article" date="2004" name="Genetics">
        <title>Conserved and nonconserved proteins for meiotic DNA breakage and repair in yeasts.</title>
        <authorList>
            <person name="Young J.A."/>
            <person name="Hyppa R.W."/>
            <person name="Smith G.R."/>
        </authorList>
    </citation>
    <scope>FUNCTION</scope>
</reference>
<reference key="6">
    <citation type="journal article" date="2004" name="Genetics">
        <title>The budding yeast mei5 and sae3 proteins act together with dmc1 during meiotic recombination.</title>
        <authorList>
            <person name="Tsubouchi H."/>
            <person name="Roeder G.S."/>
        </authorList>
    </citation>
    <scope>FUNCTION</scope>
    <scope>SUBCELLULAR LOCATION</scope>
    <scope>INTERACTION WITH MEI5</scope>
</reference>
<reference key="7">
    <citation type="journal article" date="2006" name="Mol. Genet. Genomics">
        <title>Recruitment of RecA homologs Dmc1p and Rad51p to the double-strand break repair site initiated by meiosis-specific endonuclease VDE (PI-SceI).</title>
        <authorList>
            <person name="Fukuda T."/>
            <person name="Ohya Y."/>
        </authorList>
    </citation>
    <scope>FUNCTION</scope>
    <scope>SUBCELLULAR LOCATION</scope>
</reference>
<organism>
    <name type="scientific">Saccharomyces cerevisiae (strain ATCC 204508 / S288c)</name>
    <name type="common">Baker's yeast</name>
    <dbReference type="NCBI Taxonomy" id="559292"/>
    <lineage>
        <taxon>Eukaryota</taxon>
        <taxon>Fungi</taxon>
        <taxon>Dikarya</taxon>
        <taxon>Ascomycota</taxon>
        <taxon>Saccharomycotina</taxon>
        <taxon>Saccharomycetes</taxon>
        <taxon>Saccharomycetales</taxon>
        <taxon>Saccharomycetaceae</taxon>
        <taxon>Saccharomyces</taxon>
    </lineage>
</organism>
<comment type="function">
    <text evidence="1 2 3 4 5">Involved in meiotic DNA-break repair. Required for the recruitment of DCM1 to meiosis recombination hot spots.</text>
</comment>
<comment type="subunit">
    <text>Forms a ternary complex with DMC1 and MEI5.</text>
</comment>
<comment type="interaction">
    <interactant intactId="EBI-16412526">
        <id>P89114</id>
    </interactant>
    <interactant intactId="EBI-10685">
        <id>P32489</id>
        <label>MEI5</label>
    </interactant>
    <organismsDiffer>false</organismsDiffer>
    <experiments>4</experiments>
</comment>
<comment type="subcellular location">
    <subcellularLocation>
        <location evidence="2 3 4">Nucleus</location>
    </subcellularLocation>
    <text>Localizes at chromosomal foci at leptotene and zigotene.</text>
</comment>
<comment type="induction">
    <text evidence="5">During meiosis.</text>
</comment>
<comment type="similarity">
    <text evidence="6">Belongs to the SWI5/SAE3 family.</text>
</comment>
<comment type="sequence caution" evidence="6">
    <conflict type="erroneous gene model prediction">
        <sequence resource="EMBL-CDS" id="AAB40146"/>
    </conflict>
</comment>
<comment type="sequence caution" evidence="6">
    <conflict type="erroneous gene model prediction">
        <sequence resource="EMBL-CDS" id="AAB68897"/>
    </conflict>
</comment>
<gene>
    <name type="primary">SAE3</name>
    <name type="ordered locus">YHR079C-A</name>
</gene>